<reference key="1">
    <citation type="journal article" date="2005" name="PLoS Biol.">
        <title>The Wolbachia genome of Brugia malayi: endosymbiont evolution within a human pathogenic nematode.</title>
        <authorList>
            <person name="Foster J."/>
            <person name="Ganatra M."/>
            <person name="Kamal I."/>
            <person name="Ware J."/>
            <person name="Makarova K."/>
            <person name="Ivanova N."/>
            <person name="Bhattacharyya A."/>
            <person name="Kapatral V."/>
            <person name="Kumar S."/>
            <person name="Posfai J."/>
            <person name="Vincze T."/>
            <person name="Ingram J."/>
            <person name="Moran L."/>
            <person name="Lapidus A."/>
            <person name="Omelchenko M."/>
            <person name="Kyrpides N."/>
            <person name="Ghedin E."/>
            <person name="Wang S."/>
            <person name="Goltsman E."/>
            <person name="Joukov V."/>
            <person name="Ostrovskaya O."/>
            <person name="Tsukerman K."/>
            <person name="Mazur M."/>
            <person name="Comb D."/>
            <person name="Koonin E."/>
            <person name="Slatko B."/>
        </authorList>
    </citation>
    <scope>NUCLEOTIDE SEQUENCE [LARGE SCALE GENOMIC DNA]</scope>
    <source>
        <strain>TRS</strain>
    </source>
</reference>
<organism>
    <name type="scientific">Wolbachia sp. subsp. Brugia malayi (strain TRS)</name>
    <dbReference type="NCBI Taxonomy" id="292805"/>
    <lineage>
        <taxon>Bacteria</taxon>
        <taxon>Pseudomonadati</taxon>
        <taxon>Pseudomonadota</taxon>
        <taxon>Alphaproteobacteria</taxon>
        <taxon>Rickettsiales</taxon>
        <taxon>Anaplasmataceae</taxon>
        <taxon>Wolbachieae</taxon>
        <taxon>Wolbachia</taxon>
    </lineage>
</organism>
<gene>
    <name evidence="1" type="primary">purC</name>
    <name type="ordered locus">Wbm0227</name>
</gene>
<keyword id="KW-0067">ATP-binding</keyword>
<keyword id="KW-0436">Ligase</keyword>
<keyword id="KW-0547">Nucleotide-binding</keyword>
<keyword id="KW-0658">Purine biosynthesis</keyword>
<keyword id="KW-1185">Reference proteome</keyword>
<dbReference type="EC" id="6.3.2.6" evidence="1"/>
<dbReference type="EMBL" id="AE017321">
    <property type="protein sequence ID" value="AAW70818.1"/>
    <property type="molecule type" value="Genomic_DNA"/>
</dbReference>
<dbReference type="RefSeq" id="WP_011256428.1">
    <property type="nucleotide sequence ID" value="NC_006833.1"/>
</dbReference>
<dbReference type="SMR" id="Q5GT56"/>
<dbReference type="STRING" id="292805.Wbm0227"/>
<dbReference type="KEGG" id="wbm:Wbm0227"/>
<dbReference type="eggNOG" id="COG0152">
    <property type="taxonomic scope" value="Bacteria"/>
</dbReference>
<dbReference type="HOGENOM" id="CLU_061495_2_0_5"/>
<dbReference type="UniPathway" id="UPA00074">
    <property type="reaction ID" value="UER00131"/>
</dbReference>
<dbReference type="Proteomes" id="UP000000534">
    <property type="component" value="Chromosome"/>
</dbReference>
<dbReference type="GO" id="GO:0005829">
    <property type="term" value="C:cytosol"/>
    <property type="evidence" value="ECO:0007669"/>
    <property type="project" value="TreeGrafter"/>
</dbReference>
<dbReference type="GO" id="GO:0005524">
    <property type="term" value="F:ATP binding"/>
    <property type="evidence" value="ECO:0007669"/>
    <property type="project" value="UniProtKB-KW"/>
</dbReference>
<dbReference type="GO" id="GO:0004639">
    <property type="term" value="F:phosphoribosylaminoimidazolesuccinocarboxamide synthase activity"/>
    <property type="evidence" value="ECO:0007669"/>
    <property type="project" value="UniProtKB-UniRule"/>
</dbReference>
<dbReference type="GO" id="GO:0006189">
    <property type="term" value="P:'de novo' IMP biosynthetic process"/>
    <property type="evidence" value="ECO:0007669"/>
    <property type="project" value="UniProtKB-UniRule"/>
</dbReference>
<dbReference type="GO" id="GO:0009236">
    <property type="term" value="P:cobalamin biosynthetic process"/>
    <property type="evidence" value="ECO:0007669"/>
    <property type="project" value="InterPro"/>
</dbReference>
<dbReference type="CDD" id="cd01415">
    <property type="entry name" value="SAICAR_synt_PurC"/>
    <property type="match status" value="1"/>
</dbReference>
<dbReference type="FunFam" id="3.30.470.20:FF:000006">
    <property type="entry name" value="Phosphoribosylaminoimidazole-succinocarboxamide synthase"/>
    <property type="match status" value="1"/>
</dbReference>
<dbReference type="Gene3D" id="3.30.470.20">
    <property type="entry name" value="ATP-grasp fold, B domain"/>
    <property type="match status" value="1"/>
</dbReference>
<dbReference type="Gene3D" id="3.30.200.20">
    <property type="entry name" value="Phosphorylase Kinase, domain 1"/>
    <property type="match status" value="1"/>
</dbReference>
<dbReference type="HAMAP" id="MF_00137">
    <property type="entry name" value="SAICAR_synth"/>
    <property type="match status" value="1"/>
</dbReference>
<dbReference type="InterPro" id="IPR028923">
    <property type="entry name" value="SAICAR_synt/ADE2_N"/>
</dbReference>
<dbReference type="InterPro" id="IPR033934">
    <property type="entry name" value="SAICAR_synt_PurC"/>
</dbReference>
<dbReference type="InterPro" id="IPR001636">
    <property type="entry name" value="SAICAR_synth"/>
</dbReference>
<dbReference type="InterPro" id="IPR050089">
    <property type="entry name" value="SAICAR_synthetase"/>
</dbReference>
<dbReference type="InterPro" id="IPR018236">
    <property type="entry name" value="SAICAR_synthetase_CS"/>
</dbReference>
<dbReference type="NCBIfam" id="TIGR00081">
    <property type="entry name" value="purC"/>
    <property type="match status" value="1"/>
</dbReference>
<dbReference type="PANTHER" id="PTHR43599">
    <property type="entry name" value="MULTIFUNCTIONAL PROTEIN ADE2"/>
    <property type="match status" value="1"/>
</dbReference>
<dbReference type="PANTHER" id="PTHR43599:SF3">
    <property type="entry name" value="SI:DKEY-6E2.2"/>
    <property type="match status" value="1"/>
</dbReference>
<dbReference type="Pfam" id="PF01259">
    <property type="entry name" value="SAICAR_synt"/>
    <property type="match status" value="1"/>
</dbReference>
<dbReference type="SUPFAM" id="SSF56104">
    <property type="entry name" value="SAICAR synthase-like"/>
    <property type="match status" value="1"/>
</dbReference>
<dbReference type="PROSITE" id="PS01057">
    <property type="entry name" value="SAICAR_SYNTHETASE_1"/>
    <property type="match status" value="1"/>
</dbReference>
<dbReference type="PROSITE" id="PS01058">
    <property type="entry name" value="SAICAR_SYNTHETASE_2"/>
    <property type="match status" value="1"/>
</dbReference>
<sequence>MLPDKIIYEGKAKFIIETKDPLTVIQYFKDEVTAFNKEKYKIIEGKGTINNRISTFIMETLEKAGINTHFIKTLSEREQLVKKLKIIPLEIVVRNIAAGSFCKRFNIKEGEKLAFPIIEFFYKNDGLADPMVNENHVLYFGWLSYEEMEEIKTITIKINTVLIDLFLNAGIDLVDLKLEFGRPINDNTKITLADEISPDNCRLWDKNTHKKLDKDVFRLNLGNLKEAYLEVAKRLSVKLC</sequence>
<feature type="chain" id="PRO_1000018809" description="Phosphoribosylaminoimidazole-succinocarboxamide synthase">
    <location>
        <begin position="1"/>
        <end position="240"/>
    </location>
</feature>
<name>PUR7_WOLTR</name>
<comment type="catalytic activity">
    <reaction evidence="1">
        <text>5-amino-1-(5-phospho-D-ribosyl)imidazole-4-carboxylate + L-aspartate + ATP = (2S)-2-[5-amino-1-(5-phospho-beta-D-ribosyl)imidazole-4-carboxamido]succinate + ADP + phosphate + 2 H(+)</text>
        <dbReference type="Rhea" id="RHEA:22628"/>
        <dbReference type="ChEBI" id="CHEBI:15378"/>
        <dbReference type="ChEBI" id="CHEBI:29991"/>
        <dbReference type="ChEBI" id="CHEBI:30616"/>
        <dbReference type="ChEBI" id="CHEBI:43474"/>
        <dbReference type="ChEBI" id="CHEBI:58443"/>
        <dbReference type="ChEBI" id="CHEBI:77657"/>
        <dbReference type="ChEBI" id="CHEBI:456216"/>
        <dbReference type="EC" id="6.3.2.6"/>
    </reaction>
</comment>
<comment type="pathway">
    <text evidence="1">Purine metabolism; IMP biosynthesis via de novo pathway; 5-amino-1-(5-phospho-D-ribosyl)imidazole-4-carboxamide from 5-amino-1-(5-phospho-D-ribosyl)imidazole-4-carboxylate: step 1/2.</text>
</comment>
<comment type="similarity">
    <text evidence="1">Belongs to the SAICAR synthetase family.</text>
</comment>
<proteinExistence type="inferred from homology"/>
<accession>Q5GT56</accession>
<protein>
    <recommendedName>
        <fullName evidence="1">Phosphoribosylaminoimidazole-succinocarboxamide synthase</fullName>
        <ecNumber evidence="1">6.3.2.6</ecNumber>
    </recommendedName>
    <alternativeName>
        <fullName evidence="1">SAICAR synthetase</fullName>
    </alternativeName>
</protein>
<evidence type="ECO:0000255" key="1">
    <source>
        <dbReference type="HAMAP-Rule" id="MF_00137"/>
    </source>
</evidence>